<organism>
    <name type="scientific">Chlamydia felis (strain Fe/C-56)</name>
    <name type="common">Chlamydophila felis</name>
    <dbReference type="NCBI Taxonomy" id="264202"/>
    <lineage>
        <taxon>Bacteria</taxon>
        <taxon>Pseudomonadati</taxon>
        <taxon>Chlamydiota</taxon>
        <taxon>Chlamydiia</taxon>
        <taxon>Chlamydiales</taxon>
        <taxon>Chlamydiaceae</taxon>
        <taxon>Chlamydia/Chlamydophila group</taxon>
        <taxon>Chlamydia</taxon>
    </lineage>
</organism>
<reference key="1">
    <citation type="journal article" date="2006" name="DNA Res.">
        <title>Genome sequence of the cat pathogen, Chlamydophila felis.</title>
        <authorList>
            <person name="Azuma Y."/>
            <person name="Hirakawa H."/>
            <person name="Yamashita A."/>
            <person name="Cai Y."/>
            <person name="Rahman M.A."/>
            <person name="Suzuki H."/>
            <person name="Mitaku S."/>
            <person name="Toh H."/>
            <person name="Goto S."/>
            <person name="Murakami T."/>
            <person name="Sugi K."/>
            <person name="Hayashi H."/>
            <person name="Fukushi H."/>
            <person name="Hattori M."/>
            <person name="Kuhara S."/>
            <person name="Shirai M."/>
        </authorList>
    </citation>
    <scope>NUCLEOTIDE SEQUENCE [LARGE SCALE GENOMIC DNA]</scope>
    <source>
        <strain>Fe/C-56</strain>
    </source>
</reference>
<proteinExistence type="inferred from homology"/>
<gene>
    <name evidence="1" type="primary">rplJ</name>
    <name type="ordered locus">CF0318</name>
</gene>
<comment type="function">
    <text evidence="1">Forms part of the ribosomal stalk, playing a central role in the interaction of the ribosome with GTP-bound translation factors.</text>
</comment>
<comment type="subunit">
    <text evidence="1">Part of the ribosomal stalk of the 50S ribosomal subunit. The N-terminus interacts with L11 and the large rRNA to form the base of the stalk. The C-terminus forms an elongated spine to which L12 dimers bind in a sequential fashion forming a multimeric L10(L12)X complex.</text>
</comment>
<comment type="similarity">
    <text evidence="1">Belongs to the universal ribosomal protein uL10 family.</text>
</comment>
<accession>Q255E8</accession>
<dbReference type="EMBL" id="AP006861">
    <property type="protein sequence ID" value="BAE81090.1"/>
    <property type="molecule type" value="Genomic_DNA"/>
</dbReference>
<dbReference type="RefSeq" id="WP_011457870.1">
    <property type="nucleotide sequence ID" value="NC_007899.1"/>
</dbReference>
<dbReference type="SMR" id="Q255E8"/>
<dbReference type="STRING" id="264202.CF0318"/>
<dbReference type="KEGG" id="cfe:CF0318"/>
<dbReference type="eggNOG" id="COG0244">
    <property type="taxonomic scope" value="Bacteria"/>
</dbReference>
<dbReference type="HOGENOM" id="CLU_092227_1_2_0"/>
<dbReference type="OrthoDB" id="18754at2"/>
<dbReference type="Proteomes" id="UP000001260">
    <property type="component" value="Chromosome"/>
</dbReference>
<dbReference type="GO" id="GO:0015934">
    <property type="term" value="C:large ribosomal subunit"/>
    <property type="evidence" value="ECO:0007669"/>
    <property type="project" value="InterPro"/>
</dbReference>
<dbReference type="GO" id="GO:0070180">
    <property type="term" value="F:large ribosomal subunit rRNA binding"/>
    <property type="evidence" value="ECO:0007669"/>
    <property type="project" value="UniProtKB-UniRule"/>
</dbReference>
<dbReference type="GO" id="GO:0003735">
    <property type="term" value="F:structural constituent of ribosome"/>
    <property type="evidence" value="ECO:0007669"/>
    <property type="project" value="InterPro"/>
</dbReference>
<dbReference type="GO" id="GO:0006412">
    <property type="term" value="P:translation"/>
    <property type="evidence" value="ECO:0007669"/>
    <property type="project" value="UniProtKB-UniRule"/>
</dbReference>
<dbReference type="CDD" id="cd05797">
    <property type="entry name" value="Ribosomal_L10"/>
    <property type="match status" value="1"/>
</dbReference>
<dbReference type="Gene3D" id="3.30.70.1730">
    <property type="match status" value="1"/>
</dbReference>
<dbReference type="Gene3D" id="6.10.250.290">
    <property type="match status" value="1"/>
</dbReference>
<dbReference type="HAMAP" id="MF_00362">
    <property type="entry name" value="Ribosomal_uL10"/>
    <property type="match status" value="1"/>
</dbReference>
<dbReference type="InterPro" id="IPR001790">
    <property type="entry name" value="Ribosomal_uL10"/>
</dbReference>
<dbReference type="InterPro" id="IPR043141">
    <property type="entry name" value="Ribosomal_uL10-like_sf"/>
</dbReference>
<dbReference type="InterPro" id="IPR022973">
    <property type="entry name" value="Ribosomal_uL10_bac"/>
</dbReference>
<dbReference type="InterPro" id="IPR047865">
    <property type="entry name" value="Ribosomal_uL10_bac_type"/>
</dbReference>
<dbReference type="InterPro" id="IPR002363">
    <property type="entry name" value="Ribosomal_uL10_CS_bac"/>
</dbReference>
<dbReference type="NCBIfam" id="NF000955">
    <property type="entry name" value="PRK00099.1-1"/>
    <property type="match status" value="1"/>
</dbReference>
<dbReference type="PANTHER" id="PTHR11560">
    <property type="entry name" value="39S RIBOSOMAL PROTEIN L10, MITOCHONDRIAL"/>
    <property type="match status" value="1"/>
</dbReference>
<dbReference type="Pfam" id="PF00466">
    <property type="entry name" value="Ribosomal_L10"/>
    <property type="match status" value="1"/>
</dbReference>
<dbReference type="SUPFAM" id="SSF160369">
    <property type="entry name" value="Ribosomal protein L10-like"/>
    <property type="match status" value="1"/>
</dbReference>
<dbReference type="PROSITE" id="PS01109">
    <property type="entry name" value="RIBOSOMAL_L10"/>
    <property type="match status" value="1"/>
</dbReference>
<keyword id="KW-0687">Ribonucleoprotein</keyword>
<keyword id="KW-0689">Ribosomal protein</keyword>
<keyword id="KW-0694">RNA-binding</keyword>
<keyword id="KW-0699">rRNA-binding</keyword>
<protein>
    <recommendedName>
        <fullName evidence="1">Large ribosomal subunit protein uL10</fullName>
    </recommendedName>
    <alternativeName>
        <fullName evidence="2">50S ribosomal protein L10</fullName>
    </alternativeName>
</protein>
<feature type="chain" id="PRO_1000005485" description="Large ribosomal subunit protein uL10">
    <location>
        <begin position="1"/>
        <end position="170"/>
    </location>
</feature>
<name>RL10_CHLFF</name>
<evidence type="ECO:0000255" key="1">
    <source>
        <dbReference type="HAMAP-Rule" id="MF_00362"/>
    </source>
</evidence>
<evidence type="ECO:0000305" key="2"/>
<sequence>MKEEKKLLLQEVEEKISASQGFILLRYLGFTAAHSREFRNSLSGVSAEFEVLKKRIFFKAIQSAGFDIDSSDTSGHLGVVFAYDDAVSAAKQVLDFNKQHNDSLVFLAGRIDSANLSGKEVEAVAKLPSMKELRQQIVGLIAAPMSQVVGIMGSALSGVVSCIDQKIQKN</sequence>